<protein>
    <recommendedName>
        <fullName>U2-ctenitoxin-Pn1b</fullName>
        <shortName>U2-CNTX-Pn1b</shortName>
    </recommendedName>
    <alternativeName>
        <fullName>Neurotoxin Pn2-1A</fullName>
    </alternativeName>
</protein>
<name>TX34B_PHONI</name>
<comment type="function">
    <text evidence="1">Blocks voltage-gated sodium channels (Nav).</text>
</comment>
<comment type="subcellular location">
    <subcellularLocation>
        <location>Secreted</location>
    </subcellularLocation>
</comment>
<comment type="tissue specificity">
    <text>Expressed by the venom gland.</text>
</comment>
<comment type="domain">
    <text evidence="3">The presence of a 'disulfide through disulfide knot' structurally defines this protein as a knottin.</text>
</comment>
<comment type="similarity">
    <text evidence="3">Belongs to the neurotoxin 03 (Tx2) family. 04 subfamily.</text>
</comment>
<reference key="1">
    <citation type="journal article" date="1998" name="Toxicon">
        <title>Cloning of cDNAS encoding neurotoxic peptides from the spider Phoneutria nigriventer.</title>
        <authorList>
            <person name="Kalapothakis E."/>
            <person name="Penaforte C.L."/>
            <person name="Beirao P.S.L."/>
            <person name="Romano-Silva M.A."/>
            <person name="Cruz J.S."/>
            <person name="Prado M.A.M."/>
            <person name="Guimaraes P.E.M."/>
            <person name="Gomez M.V."/>
            <person name="Prado V.F."/>
        </authorList>
    </citation>
    <scope>NUCLEOTIDE SEQUENCE [MRNA]</scope>
    <source>
        <tissue>Venom gland</tissue>
    </source>
</reference>
<accession>O76198</accession>
<organism>
    <name type="scientific">Phoneutria nigriventer</name>
    <name type="common">Brazilian armed spider</name>
    <name type="synonym">Ctenus nigriventer</name>
    <dbReference type="NCBI Taxonomy" id="6918"/>
    <lineage>
        <taxon>Eukaryota</taxon>
        <taxon>Metazoa</taxon>
        <taxon>Ecdysozoa</taxon>
        <taxon>Arthropoda</taxon>
        <taxon>Chelicerata</taxon>
        <taxon>Arachnida</taxon>
        <taxon>Araneae</taxon>
        <taxon>Araneomorphae</taxon>
        <taxon>Entelegynae</taxon>
        <taxon>Lycosoidea</taxon>
        <taxon>Ctenidae</taxon>
        <taxon>Phoneutria</taxon>
    </lineage>
</organism>
<keyword id="KW-1015">Disulfide bond</keyword>
<keyword id="KW-0872">Ion channel impairing toxin</keyword>
<keyword id="KW-0960">Knottin</keyword>
<keyword id="KW-0528">Neurotoxin</keyword>
<keyword id="KW-0964">Secreted</keyword>
<keyword id="KW-0732">Signal</keyword>
<keyword id="KW-0800">Toxin</keyword>
<keyword id="KW-0738">Voltage-gated sodium channel impairing toxin</keyword>
<sequence>MKVAVIILSILVLAAASESIEEYREDFSRPNAMERSANDWIPTAPSAVERSADFAVEELERATCAGQDKPCKETCDCCGERGECVCALSYEGKYRCICRQGYVWIAWYKLASCKK</sequence>
<dbReference type="EMBL" id="AF014462">
    <property type="protein sequence ID" value="AAC26164.1"/>
    <property type="molecule type" value="mRNA"/>
</dbReference>
<dbReference type="SMR" id="O76198"/>
<dbReference type="ArachnoServer" id="AS000232">
    <property type="toxin name" value="U2-ctenitoxin-Pn1b"/>
</dbReference>
<dbReference type="GO" id="GO:0005576">
    <property type="term" value="C:extracellular region"/>
    <property type="evidence" value="ECO:0007669"/>
    <property type="project" value="UniProtKB-SubCell"/>
</dbReference>
<dbReference type="GO" id="GO:0017080">
    <property type="term" value="F:sodium channel regulator activity"/>
    <property type="evidence" value="ECO:0007669"/>
    <property type="project" value="UniProtKB-KW"/>
</dbReference>
<dbReference type="GO" id="GO:0090729">
    <property type="term" value="F:toxin activity"/>
    <property type="evidence" value="ECO:0007669"/>
    <property type="project" value="UniProtKB-KW"/>
</dbReference>
<dbReference type="InterPro" id="IPR035285">
    <property type="entry name" value="CNTX"/>
</dbReference>
<dbReference type="Pfam" id="PF17492">
    <property type="entry name" value="D_CNTX"/>
    <property type="match status" value="1"/>
</dbReference>
<evidence type="ECO:0000250" key="1"/>
<evidence type="ECO:0000255" key="2"/>
<evidence type="ECO:0000305" key="3"/>
<proteinExistence type="evidence at transcript level"/>
<feature type="signal peptide" evidence="2">
    <location>
        <begin position="1"/>
        <end position="17"/>
    </location>
</feature>
<feature type="propeptide" id="PRO_0000035501" evidence="1">
    <location>
        <begin position="18"/>
        <end position="61"/>
    </location>
</feature>
<feature type="chain" id="PRO_0000035502" description="U2-ctenitoxin-Pn1b">
    <location>
        <begin position="62"/>
        <end position="114"/>
    </location>
</feature>
<feature type="propeptide" id="PRO_0000035503" evidence="1">
    <location>
        <position position="115"/>
    </location>
</feature>
<feature type="disulfide bond" evidence="3">
    <location>
        <begin position="64"/>
        <end position="78"/>
    </location>
</feature>
<feature type="disulfide bond" evidence="3">
    <location>
        <begin position="71"/>
        <end position="84"/>
    </location>
</feature>
<feature type="disulfide bond" evidence="3">
    <location>
        <begin position="75"/>
        <end position="113"/>
    </location>
</feature>
<feature type="disulfide bond" evidence="3">
    <location>
        <begin position="77"/>
        <end position="98"/>
    </location>
</feature>
<feature type="disulfide bond" evidence="3">
    <location>
        <begin position="86"/>
        <end position="96"/>
    </location>
</feature>